<evidence type="ECO:0000250" key="1"/>
<evidence type="ECO:0000255" key="2"/>
<evidence type="ECO:0000255" key="3">
    <source>
        <dbReference type="PROSITE-ProRule" id="PRU00038"/>
    </source>
</evidence>
<evidence type="ECO:0000255" key="4">
    <source>
        <dbReference type="PROSITE-ProRule" id="PRU00315"/>
    </source>
</evidence>
<evidence type="ECO:0000305" key="5"/>
<evidence type="ECO:0000305" key="6">
    <source ref="1"/>
</evidence>
<sequence length="436" mass="49779">MKGVRKPYDNSYTLSFLLVFFVLILFCPAFSINTLSSTESLRISSNRTLVSPGNNFELGFFRTNSSSRWYLGIWYKKLLDRTYVWVANRDNPLSNAIGTLKISGNNLVLLGHTNKSVWSTNLTRGNERLPVVAELLSNGNFVMRDSSNNDASEYLWQSFDYPTDTLLPEMKLGYDLKTGLNRFLTSWRSSDDPSSGDFSYKLETRSLPEFYLWHGIFPMHRSGPWNGVRFSGIPEDQKLSYMVYNFTENSEEVAYTFRMTNNSIYSRLTLSSEGYFQRLTWNPSIGIWNRFWSSPVDPQCDTYIMCGPYAYCGVNTSPVCNCIQGFNPRNIQQWDQRVWAGGCIRRTRLSCSGDGFTRMKNMKLPETTMAIVDRSIGVKECEKRCLSDCNCTAFANADIRNGGTGCVIWTGRLDDMRNYVAHGQDLYVRLAVADLV</sequence>
<comment type="function">
    <text>Involved in sporophytic self-incompatibility system (the inability of flowering plants to achieve self-fertilization).</text>
</comment>
<comment type="tissue specificity">
    <text>Stigma.</text>
</comment>
<comment type="polymorphism">
    <text evidence="6">There are a total of 50 different S alleles in B.oleracea.</text>
</comment>
<comment type="sequence caution" evidence="5">
    <conflict type="erroneous initiation">
        <sequence resource="EMBL-CDS" id="CAA26934"/>
    </conflict>
</comment>
<gene>
    <name type="primary">SLSG</name>
</gene>
<reference key="1">
    <citation type="journal article" date="1987" name="Nature">
        <title>Amino-acid sequence of glycoproteins encoded by three alleles of the S locus of Brassica oleracea.</title>
        <authorList>
            <person name="Nasrallah J.B."/>
            <person name="Kao T.-H."/>
            <person name="Chen C.H."/>
            <person name="Goldberg M.L."/>
            <person name="Nasrallah M.E."/>
        </authorList>
    </citation>
    <scope>NUCLEOTIDE SEQUENCE [MRNA]</scope>
    <scope>POLYMORPHISM</scope>
</reference>
<reference key="2">
    <citation type="journal article" date="1985" name="Nature">
        <title>A cDNA clone encoding an S-locus-specific glycoprotein from Brassica oleracea.</title>
        <authorList>
            <person name="Nasrallah J.B."/>
            <person name="Kao T.-H."/>
            <person name="Goldberg M.L."/>
            <person name="Nasrallah M.E."/>
        </authorList>
    </citation>
    <scope>NUCLEOTIDE SEQUENCE [MRNA] OF 22-435</scope>
</reference>
<accession>P07761</accession>
<feature type="signal peptide" evidence="2">
    <location>
        <begin position="1"/>
        <end position="31"/>
    </location>
</feature>
<feature type="chain" id="PRO_0000022366" description="S-locus-specific glycoprotein S6">
    <location>
        <begin position="32"/>
        <end position="436"/>
    </location>
</feature>
<feature type="domain" description="Bulb-type lectin" evidence="3">
    <location>
        <begin position="34"/>
        <end position="156"/>
    </location>
</feature>
<feature type="domain" description="PAN" evidence="4">
    <location>
        <begin position="351"/>
        <end position="431"/>
    </location>
</feature>
<feature type="glycosylation site" description="N-linked (GlcNAc...) asparagine" evidence="2">
    <location>
        <position position="46"/>
    </location>
</feature>
<feature type="glycosylation site" description="N-linked (GlcNAc...) asparagine" evidence="2">
    <location>
        <position position="64"/>
    </location>
</feature>
<feature type="glycosylation site" description="N-linked (GlcNAc...) asparagine" evidence="2">
    <location>
        <position position="114"/>
    </location>
</feature>
<feature type="glycosylation site" description="N-linked (GlcNAc...) asparagine" evidence="2">
    <location>
        <position position="121"/>
    </location>
</feature>
<feature type="glycosylation site" description="N-linked (GlcNAc...) asparagine" evidence="2">
    <location>
        <position position="245"/>
    </location>
</feature>
<feature type="glycosylation site" description="N-linked (GlcNAc...) asparagine" evidence="2">
    <location>
        <position position="261"/>
    </location>
</feature>
<feature type="glycosylation site" description="N-linked (GlcNAc...) asparagine" evidence="2">
    <location>
        <position position="390"/>
    </location>
</feature>
<feature type="disulfide bond" evidence="1">
    <location>
        <begin position="381"/>
        <end position="406"/>
    </location>
</feature>
<feature type="disulfide bond" evidence="1">
    <location>
        <begin position="389"/>
        <end position="391"/>
    </location>
</feature>
<protein>
    <recommendedName>
        <fullName>S-locus-specific glycoprotein S6</fullName>
        <shortName>SLSG-6</shortName>
    </recommendedName>
</protein>
<keyword id="KW-1015">Disulfide bond</keyword>
<keyword id="KW-0325">Glycoprotein</keyword>
<keyword id="KW-0713">Self-incompatibility</keyword>
<keyword id="KW-0732">Signal</keyword>
<name>SLSG6_BRAOL</name>
<proteinExistence type="evidence at transcript level"/>
<organism>
    <name type="scientific">Brassica oleracea</name>
    <name type="common">Wild cabbage</name>
    <dbReference type="NCBI Taxonomy" id="3712"/>
    <lineage>
        <taxon>Eukaryota</taxon>
        <taxon>Viridiplantae</taxon>
        <taxon>Streptophyta</taxon>
        <taxon>Embryophyta</taxon>
        <taxon>Tracheophyta</taxon>
        <taxon>Spermatophyta</taxon>
        <taxon>Magnoliopsida</taxon>
        <taxon>eudicotyledons</taxon>
        <taxon>Gunneridae</taxon>
        <taxon>Pentapetalae</taxon>
        <taxon>rosids</taxon>
        <taxon>malvids</taxon>
        <taxon>Brassicales</taxon>
        <taxon>Brassicaceae</taxon>
        <taxon>Brassiceae</taxon>
        <taxon>Brassica</taxon>
    </lineage>
</organism>
<dbReference type="EMBL" id="Y00268">
    <property type="protein sequence ID" value="CAA68375.1"/>
    <property type="molecule type" value="mRNA"/>
</dbReference>
<dbReference type="EMBL" id="X03170">
    <property type="protein sequence ID" value="CAA26934.1"/>
    <property type="status" value="ALT_INIT"/>
    <property type="molecule type" value="mRNA"/>
</dbReference>
<dbReference type="PIR" id="A27827">
    <property type="entry name" value="A27827"/>
</dbReference>
<dbReference type="SMR" id="P07761"/>
<dbReference type="GlyCosmos" id="P07761">
    <property type="glycosylation" value="7 sites, No reported glycans"/>
</dbReference>
<dbReference type="GO" id="GO:0060320">
    <property type="term" value="P:rejection of self pollen"/>
    <property type="evidence" value="ECO:0007669"/>
    <property type="project" value="UniProtKB-KW"/>
</dbReference>
<dbReference type="CDD" id="cd00028">
    <property type="entry name" value="B_lectin"/>
    <property type="match status" value="1"/>
</dbReference>
<dbReference type="CDD" id="cd01098">
    <property type="entry name" value="PAN_AP_plant"/>
    <property type="match status" value="1"/>
</dbReference>
<dbReference type="FunFam" id="2.90.10.10:FF:000047">
    <property type="entry name" value="Putative inactive G-type lectin S-receptor-like serine/threonine-protein kinase SRK"/>
    <property type="match status" value="1"/>
</dbReference>
<dbReference type="Gene3D" id="2.90.10.10">
    <property type="entry name" value="Bulb-type lectin domain"/>
    <property type="match status" value="1"/>
</dbReference>
<dbReference type="Gene3D" id="3.50.4.10">
    <property type="entry name" value="Hepatocyte Growth Factor"/>
    <property type="match status" value="1"/>
</dbReference>
<dbReference type="InterPro" id="IPR001480">
    <property type="entry name" value="Bulb-type_lectin_dom"/>
</dbReference>
<dbReference type="InterPro" id="IPR036426">
    <property type="entry name" value="Bulb-type_lectin_dom_sf"/>
</dbReference>
<dbReference type="InterPro" id="IPR003609">
    <property type="entry name" value="Pan_app"/>
</dbReference>
<dbReference type="InterPro" id="IPR000858">
    <property type="entry name" value="S_locus_glycoprot_dom"/>
</dbReference>
<dbReference type="InterPro" id="IPR035446">
    <property type="entry name" value="SLSG/EP1"/>
</dbReference>
<dbReference type="PANTHER" id="PTHR32444">
    <property type="entry name" value="BULB-TYPE LECTIN DOMAIN-CONTAINING PROTEIN"/>
    <property type="match status" value="1"/>
</dbReference>
<dbReference type="PANTHER" id="PTHR32444:SF251">
    <property type="entry name" value="INACTIVE G-TYPE LECTIN S-RECEPTOR-LIKE SERINE_THREONINE-PROTEIN KINASE SRK-RELATED"/>
    <property type="match status" value="1"/>
</dbReference>
<dbReference type="Pfam" id="PF01453">
    <property type="entry name" value="B_lectin"/>
    <property type="match status" value="1"/>
</dbReference>
<dbReference type="Pfam" id="PF08276">
    <property type="entry name" value="PAN_2"/>
    <property type="match status" value="1"/>
</dbReference>
<dbReference type="Pfam" id="PF00954">
    <property type="entry name" value="S_locus_glycop"/>
    <property type="match status" value="1"/>
</dbReference>
<dbReference type="PIRSF" id="PIRSF002686">
    <property type="entry name" value="SLG"/>
    <property type="match status" value="1"/>
</dbReference>
<dbReference type="SMART" id="SM00108">
    <property type="entry name" value="B_lectin"/>
    <property type="match status" value="1"/>
</dbReference>
<dbReference type="SMART" id="SM00473">
    <property type="entry name" value="PAN_AP"/>
    <property type="match status" value="1"/>
</dbReference>
<dbReference type="SUPFAM" id="SSF51110">
    <property type="entry name" value="alpha-D-mannose-specific plant lectins"/>
    <property type="match status" value="1"/>
</dbReference>
<dbReference type="PROSITE" id="PS50927">
    <property type="entry name" value="BULB_LECTIN"/>
    <property type="match status" value="1"/>
</dbReference>
<dbReference type="PROSITE" id="PS50948">
    <property type="entry name" value="PAN"/>
    <property type="match status" value="1"/>
</dbReference>